<reference key="1">
    <citation type="journal article" date="2009" name="Proc. Natl. Acad. Sci. U.S.A.">
        <title>Characterizing a model human gut microbiota composed of members of its two dominant bacterial phyla.</title>
        <authorList>
            <person name="Mahowald M.A."/>
            <person name="Rey F.E."/>
            <person name="Seedorf H."/>
            <person name="Turnbaugh P.J."/>
            <person name="Fulton R.S."/>
            <person name="Wollam A."/>
            <person name="Shah N."/>
            <person name="Wang C."/>
            <person name="Magrini V."/>
            <person name="Wilson R.K."/>
            <person name="Cantarel B.L."/>
            <person name="Coutinho P.M."/>
            <person name="Henrissat B."/>
            <person name="Crock L.W."/>
            <person name="Russell A."/>
            <person name="Verberkmoes N.C."/>
            <person name="Hettich R.L."/>
            <person name="Gordon J.I."/>
        </authorList>
    </citation>
    <scope>NUCLEOTIDE SEQUENCE [LARGE SCALE GENOMIC DNA]</scope>
    <source>
        <strain>ATCC 33656 / DSM 3377 / JCM 17463 / KCTC 5835 / LMG 30912 / VPI 0990</strain>
    </source>
</reference>
<feature type="chain" id="PRO_1000213931" description="Uracil phosphoribosyltransferase">
    <location>
        <begin position="1"/>
        <end position="209"/>
    </location>
</feature>
<feature type="binding site" evidence="1">
    <location>
        <position position="79"/>
    </location>
    <ligand>
        <name>5-phospho-alpha-D-ribose 1-diphosphate</name>
        <dbReference type="ChEBI" id="CHEBI:58017"/>
    </ligand>
</feature>
<feature type="binding site" evidence="1">
    <location>
        <position position="104"/>
    </location>
    <ligand>
        <name>5-phospho-alpha-D-ribose 1-diphosphate</name>
        <dbReference type="ChEBI" id="CHEBI:58017"/>
    </ligand>
</feature>
<feature type="binding site" evidence="1">
    <location>
        <begin position="131"/>
        <end position="139"/>
    </location>
    <ligand>
        <name>5-phospho-alpha-D-ribose 1-diphosphate</name>
        <dbReference type="ChEBI" id="CHEBI:58017"/>
    </ligand>
</feature>
<feature type="binding site" evidence="1">
    <location>
        <position position="194"/>
    </location>
    <ligand>
        <name>uracil</name>
        <dbReference type="ChEBI" id="CHEBI:17568"/>
    </ligand>
</feature>
<feature type="binding site" evidence="1">
    <location>
        <begin position="199"/>
        <end position="201"/>
    </location>
    <ligand>
        <name>uracil</name>
        <dbReference type="ChEBI" id="CHEBI:17568"/>
    </ligand>
</feature>
<feature type="binding site" evidence="1">
    <location>
        <position position="200"/>
    </location>
    <ligand>
        <name>5-phospho-alpha-D-ribose 1-diphosphate</name>
        <dbReference type="ChEBI" id="CHEBI:58017"/>
    </ligand>
</feature>
<name>UPP_AGARV</name>
<gene>
    <name evidence="1" type="primary">upp</name>
    <name type="ordered locus">EUBREC_0114</name>
</gene>
<proteinExistence type="inferred from homology"/>
<comment type="function">
    <text evidence="1">Catalyzes the conversion of uracil and 5-phospho-alpha-D-ribose 1-diphosphate (PRPP) to UMP and diphosphate.</text>
</comment>
<comment type="catalytic activity">
    <reaction evidence="1">
        <text>UMP + diphosphate = 5-phospho-alpha-D-ribose 1-diphosphate + uracil</text>
        <dbReference type="Rhea" id="RHEA:13017"/>
        <dbReference type="ChEBI" id="CHEBI:17568"/>
        <dbReference type="ChEBI" id="CHEBI:33019"/>
        <dbReference type="ChEBI" id="CHEBI:57865"/>
        <dbReference type="ChEBI" id="CHEBI:58017"/>
        <dbReference type="EC" id="2.4.2.9"/>
    </reaction>
</comment>
<comment type="cofactor">
    <cofactor evidence="1">
        <name>Mg(2+)</name>
        <dbReference type="ChEBI" id="CHEBI:18420"/>
    </cofactor>
    <text evidence="1">Binds 1 Mg(2+) ion per subunit. The magnesium is bound as Mg-PRPP.</text>
</comment>
<comment type="activity regulation">
    <text evidence="1">Allosterically activated by GTP.</text>
</comment>
<comment type="pathway">
    <text evidence="1">Pyrimidine metabolism; UMP biosynthesis via salvage pathway; UMP from uracil: step 1/1.</text>
</comment>
<comment type="similarity">
    <text evidence="1">Belongs to the UPRTase family.</text>
</comment>
<keyword id="KW-0021">Allosteric enzyme</keyword>
<keyword id="KW-0328">Glycosyltransferase</keyword>
<keyword id="KW-0342">GTP-binding</keyword>
<keyword id="KW-0460">Magnesium</keyword>
<keyword id="KW-0547">Nucleotide-binding</keyword>
<keyword id="KW-0808">Transferase</keyword>
<sequence>MGKVVVMDHPLIQHKIGIMRRTDTGSKDFRTLVSEVAMLECYEATRDLELTDVEIETPICKATVKELKGKKLAVVPILRAGLGMVEGMLELIPAAKVGHIGMYRDPETAEPIEYYCKLPADCANREVFVVDPMLATGGSAVAALDMLKKRGVKNIHFMCIIAAPEGVKRLTEAHPDVDVYIGALDDHLNEHKYIVPGLGDAGDRIFGTK</sequence>
<evidence type="ECO:0000255" key="1">
    <source>
        <dbReference type="HAMAP-Rule" id="MF_01218"/>
    </source>
</evidence>
<dbReference type="EC" id="2.4.2.9" evidence="1"/>
<dbReference type="EMBL" id="CP001107">
    <property type="protein sequence ID" value="ACR73919.1"/>
    <property type="molecule type" value="Genomic_DNA"/>
</dbReference>
<dbReference type="RefSeq" id="WP_012741040.1">
    <property type="nucleotide sequence ID" value="NZ_CAXSYD010000028.1"/>
</dbReference>
<dbReference type="SMR" id="C4Z9S1"/>
<dbReference type="STRING" id="515619.EUBREC_0114"/>
<dbReference type="PaxDb" id="515619-EUBREC_0114"/>
<dbReference type="GeneID" id="86987051"/>
<dbReference type="KEGG" id="ere:EUBREC_0114"/>
<dbReference type="HOGENOM" id="CLU_067096_2_2_9"/>
<dbReference type="UniPathway" id="UPA00574">
    <property type="reaction ID" value="UER00636"/>
</dbReference>
<dbReference type="Proteomes" id="UP000001477">
    <property type="component" value="Chromosome"/>
</dbReference>
<dbReference type="GO" id="GO:0005525">
    <property type="term" value="F:GTP binding"/>
    <property type="evidence" value="ECO:0007669"/>
    <property type="project" value="UniProtKB-KW"/>
</dbReference>
<dbReference type="GO" id="GO:0000287">
    <property type="term" value="F:magnesium ion binding"/>
    <property type="evidence" value="ECO:0007669"/>
    <property type="project" value="UniProtKB-UniRule"/>
</dbReference>
<dbReference type="GO" id="GO:0004845">
    <property type="term" value="F:uracil phosphoribosyltransferase activity"/>
    <property type="evidence" value="ECO:0007669"/>
    <property type="project" value="UniProtKB-UniRule"/>
</dbReference>
<dbReference type="GO" id="GO:0044206">
    <property type="term" value="P:UMP salvage"/>
    <property type="evidence" value="ECO:0007669"/>
    <property type="project" value="UniProtKB-UniRule"/>
</dbReference>
<dbReference type="GO" id="GO:0006223">
    <property type="term" value="P:uracil salvage"/>
    <property type="evidence" value="ECO:0007669"/>
    <property type="project" value="InterPro"/>
</dbReference>
<dbReference type="CDD" id="cd06223">
    <property type="entry name" value="PRTases_typeI"/>
    <property type="match status" value="1"/>
</dbReference>
<dbReference type="FunFam" id="3.40.50.2020:FF:000003">
    <property type="entry name" value="Uracil phosphoribosyltransferase"/>
    <property type="match status" value="1"/>
</dbReference>
<dbReference type="Gene3D" id="3.40.50.2020">
    <property type="match status" value="1"/>
</dbReference>
<dbReference type="HAMAP" id="MF_01218_B">
    <property type="entry name" value="Upp_B"/>
    <property type="match status" value="1"/>
</dbReference>
<dbReference type="InterPro" id="IPR000836">
    <property type="entry name" value="PRibTrfase_dom"/>
</dbReference>
<dbReference type="InterPro" id="IPR029057">
    <property type="entry name" value="PRTase-like"/>
</dbReference>
<dbReference type="InterPro" id="IPR034332">
    <property type="entry name" value="Upp_B"/>
</dbReference>
<dbReference type="InterPro" id="IPR050054">
    <property type="entry name" value="UPRTase/APRTase"/>
</dbReference>
<dbReference type="InterPro" id="IPR005765">
    <property type="entry name" value="Ura_phspho_trans"/>
</dbReference>
<dbReference type="NCBIfam" id="NF001097">
    <property type="entry name" value="PRK00129.1"/>
    <property type="match status" value="1"/>
</dbReference>
<dbReference type="NCBIfam" id="TIGR01091">
    <property type="entry name" value="upp"/>
    <property type="match status" value="1"/>
</dbReference>
<dbReference type="PANTHER" id="PTHR32315">
    <property type="entry name" value="ADENINE PHOSPHORIBOSYLTRANSFERASE"/>
    <property type="match status" value="1"/>
</dbReference>
<dbReference type="PANTHER" id="PTHR32315:SF4">
    <property type="entry name" value="URACIL PHOSPHORIBOSYLTRANSFERASE, CHLOROPLASTIC"/>
    <property type="match status" value="1"/>
</dbReference>
<dbReference type="Pfam" id="PF14681">
    <property type="entry name" value="UPRTase"/>
    <property type="match status" value="1"/>
</dbReference>
<dbReference type="SUPFAM" id="SSF53271">
    <property type="entry name" value="PRTase-like"/>
    <property type="match status" value="1"/>
</dbReference>
<protein>
    <recommendedName>
        <fullName evidence="1">Uracil phosphoribosyltransferase</fullName>
        <ecNumber evidence="1">2.4.2.9</ecNumber>
    </recommendedName>
    <alternativeName>
        <fullName evidence="1">UMP pyrophosphorylase</fullName>
    </alternativeName>
    <alternativeName>
        <fullName evidence="1">UPRTase</fullName>
    </alternativeName>
</protein>
<organism>
    <name type="scientific">Agathobacter rectalis (strain ATCC 33656 / DSM 3377 / JCM 17463 / KCTC 5835 / VPI 0990)</name>
    <name type="common">Eubacterium rectale</name>
    <dbReference type="NCBI Taxonomy" id="515619"/>
    <lineage>
        <taxon>Bacteria</taxon>
        <taxon>Bacillati</taxon>
        <taxon>Bacillota</taxon>
        <taxon>Clostridia</taxon>
        <taxon>Lachnospirales</taxon>
        <taxon>Lachnospiraceae</taxon>
        <taxon>Agathobacter</taxon>
    </lineage>
</organism>
<accession>C4Z9S1</accession>